<sequence length="248" mass="26775">MAGHSQFKNIMHRKGKQDAMRSKVFGKLAREITVAAKLGTPDPAMNPRLRAAVLAARAENMPKDNIERAIKKAAGGDSENYDEIRYEGYGPGGVAVIVEALTDNRNRAASDIRSYFTKSGGNLGETGSVSFMFDRVGVIEYDADKASADDMLEAAIEAGADDVASSEEGHEIYTSQASLSEAAKALEAKFGEPRKAALIWKPQNNIAVSDEVGEKLFKLLDQLNEHDDVQNVYANFEVSDTLAAKMAG</sequence>
<reference key="1">
    <citation type="journal article" date="2008" name="J. Bacteriol.">
        <title>Genome sequence of the chemolithoautotrophic bacterium Oligotropha carboxidovorans OM5T.</title>
        <authorList>
            <person name="Paul D."/>
            <person name="Bridges S."/>
            <person name="Burgess S.C."/>
            <person name="Dandass Y."/>
            <person name="Lawrence M.L."/>
        </authorList>
    </citation>
    <scope>NUCLEOTIDE SEQUENCE [LARGE SCALE GENOMIC DNA]</scope>
    <source>
        <strain>ATCC 49405 / DSM 1227 / KCTC 32145 / OM5</strain>
    </source>
</reference>
<reference key="2">
    <citation type="journal article" date="2011" name="J. Bacteriol.">
        <title>Complete genome sequences of the chemolithoautotrophic Oligotropha carboxidovorans strains OM4 and OM5.</title>
        <authorList>
            <person name="Volland S."/>
            <person name="Rachinger M."/>
            <person name="Strittmatter A."/>
            <person name="Daniel R."/>
            <person name="Gottschalk G."/>
            <person name="Meyer O."/>
        </authorList>
    </citation>
    <scope>NUCLEOTIDE SEQUENCE [LARGE SCALE GENOMIC DNA]</scope>
    <source>
        <strain>ATCC 49405 / DSM 1227 / KCTC 32145 / OM5</strain>
    </source>
</reference>
<accession>B6JJ00</accession>
<accession>F8BZ43</accession>
<protein>
    <recommendedName>
        <fullName evidence="1">Probable transcriptional regulatory protein OCAR_7305/OCA5_c08120</fullName>
    </recommendedName>
</protein>
<gene>
    <name type="ordered locus">OCAR_7305</name>
    <name type="ordered locus">OCA5_c08120</name>
</gene>
<feature type="chain" id="PRO_1000132223" description="Probable transcriptional regulatory protein OCAR_7305/OCA5_c08120">
    <location>
        <begin position="1"/>
        <end position="248"/>
    </location>
</feature>
<proteinExistence type="inferred from homology"/>
<dbReference type="EMBL" id="CP001196">
    <property type="protein sequence ID" value="ACI94409.1"/>
    <property type="molecule type" value="Genomic_DNA"/>
</dbReference>
<dbReference type="EMBL" id="CP002826">
    <property type="protein sequence ID" value="AEI05534.1"/>
    <property type="molecule type" value="Genomic_DNA"/>
</dbReference>
<dbReference type="RefSeq" id="WP_012564435.1">
    <property type="nucleotide sequence ID" value="NC_015684.1"/>
</dbReference>
<dbReference type="SMR" id="B6JJ00"/>
<dbReference type="STRING" id="504832.OCA5_c08120"/>
<dbReference type="KEGG" id="oca:OCAR_7305"/>
<dbReference type="KEGG" id="ocg:OCA5_c08120"/>
<dbReference type="PATRIC" id="fig|504832.7.peg.858"/>
<dbReference type="eggNOG" id="COG0217">
    <property type="taxonomic scope" value="Bacteria"/>
</dbReference>
<dbReference type="HOGENOM" id="CLU_062974_2_2_5"/>
<dbReference type="OrthoDB" id="9781053at2"/>
<dbReference type="Proteomes" id="UP000007730">
    <property type="component" value="Chromosome"/>
</dbReference>
<dbReference type="GO" id="GO:0005829">
    <property type="term" value="C:cytosol"/>
    <property type="evidence" value="ECO:0007669"/>
    <property type="project" value="TreeGrafter"/>
</dbReference>
<dbReference type="GO" id="GO:0003677">
    <property type="term" value="F:DNA binding"/>
    <property type="evidence" value="ECO:0007669"/>
    <property type="project" value="UniProtKB-UniRule"/>
</dbReference>
<dbReference type="GO" id="GO:0006355">
    <property type="term" value="P:regulation of DNA-templated transcription"/>
    <property type="evidence" value="ECO:0007669"/>
    <property type="project" value="UniProtKB-UniRule"/>
</dbReference>
<dbReference type="FunFam" id="1.10.10.200:FF:000002">
    <property type="entry name" value="Probable transcriptional regulatory protein CLM62_37755"/>
    <property type="match status" value="1"/>
</dbReference>
<dbReference type="Gene3D" id="1.10.10.200">
    <property type="match status" value="1"/>
</dbReference>
<dbReference type="Gene3D" id="3.30.70.980">
    <property type="match status" value="2"/>
</dbReference>
<dbReference type="HAMAP" id="MF_00693">
    <property type="entry name" value="Transcrip_reg_TACO1"/>
    <property type="match status" value="1"/>
</dbReference>
<dbReference type="InterPro" id="IPR017856">
    <property type="entry name" value="Integrase-like_N"/>
</dbReference>
<dbReference type="InterPro" id="IPR048300">
    <property type="entry name" value="TACO1_YebC-like_2nd/3rd_dom"/>
</dbReference>
<dbReference type="InterPro" id="IPR049083">
    <property type="entry name" value="TACO1_YebC_N"/>
</dbReference>
<dbReference type="InterPro" id="IPR002876">
    <property type="entry name" value="Transcrip_reg_TACO1-like"/>
</dbReference>
<dbReference type="InterPro" id="IPR026564">
    <property type="entry name" value="Transcrip_reg_TACO1-like_dom3"/>
</dbReference>
<dbReference type="InterPro" id="IPR029072">
    <property type="entry name" value="YebC-like"/>
</dbReference>
<dbReference type="NCBIfam" id="NF001030">
    <property type="entry name" value="PRK00110.1"/>
    <property type="match status" value="1"/>
</dbReference>
<dbReference type="NCBIfam" id="NF009044">
    <property type="entry name" value="PRK12378.1"/>
    <property type="match status" value="1"/>
</dbReference>
<dbReference type="NCBIfam" id="TIGR01033">
    <property type="entry name" value="YebC/PmpR family DNA-binding transcriptional regulator"/>
    <property type="match status" value="1"/>
</dbReference>
<dbReference type="PANTHER" id="PTHR12532:SF6">
    <property type="entry name" value="TRANSCRIPTIONAL REGULATORY PROTEIN YEBC-RELATED"/>
    <property type="match status" value="1"/>
</dbReference>
<dbReference type="PANTHER" id="PTHR12532">
    <property type="entry name" value="TRANSLATIONAL ACTIVATOR OF CYTOCHROME C OXIDASE 1"/>
    <property type="match status" value="1"/>
</dbReference>
<dbReference type="Pfam" id="PF20772">
    <property type="entry name" value="TACO1_YebC_N"/>
    <property type="match status" value="1"/>
</dbReference>
<dbReference type="Pfam" id="PF01709">
    <property type="entry name" value="Transcrip_reg"/>
    <property type="match status" value="1"/>
</dbReference>
<dbReference type="SUPFAM" id="SSF75625">
    <property type="entry name" value="YebC-like"/>
    <property type="match status" value="1"/>
</dbReference>
<evidence type="ECO:0000255" key="1">
    <source>
        <dbReference type="HAMAP-Rule" id="MF_00693"/>
    </source>
</evidence>
<organism>
    <name type="scientific">Afipia carboxidovorans (strain ATCC 49405 / DSM 1227 / KCTC 32145 / OM5)</name>
    <name type="common">Oligotropha carboxidovorans</name>
    <dbReference type="NCBI Taxonomy" id="504832"/>
    <lineage>
        <taxon>Bacteria</taxon>
        <taxon>Pseudomonadati</taxon>
        <taxon>Pseudomonadota</taxon>
        <taxon>Alphaproteobacteria</taxon>
        <taxon>Hyphomicrobiales</taxon>
        <taxon>Nitrobacteraceae</taxon>
        <taxon>Afipia</taxon>
    </lineage>
</organism>
<comment type="subcellular location">
    <subcellularLocation>
        <location evidence="1">Cytoplasm</location>
    </subcellularLocation>
</comment>
<comment type="similarity">
    <text evidence="1">Belongs to the TACO1 family.</text>
</comment>
<keyword id="KW-0963">Cytoplasm</keyword>
<keyword id="KW-0238">DNA-binding</keyword>
<keyword id="KW-1185">Reference proteome</keyword>
<keyword id="KW-0804">Transcription</keyword>
<keyword id="KW-0805">Transcription regulation</keyword>
<name>Y7305_AFIC5</name>